<comment type="function">
    <text evidence="1">Involved in the synthesis of autoinducer 2 (AI-2) which is secreted by bacteria and is used to communicate both the cell density and the metabolic potential of the environment. The regulation of gene expression in response to changes in cell density is called quorum sensing. Catalyzes the transformation of S-ribosylhomocysteine (RHC) to homocysteine (HC) and 4,5-dihydroxy-2,3-pentadione (DPD).</text>
</comment>
<comment type="catalytic activity">
    <reaction evidence="1">
        <text>S-(5-deoxy-D-ribos-5-yl)-L-homocysteine = (S)-4,5-dihydroxypentane-2,3-dione + L-homocysteine</text>
        <dbReference type="Rhea" id="RHEA:17753"/>
        <dbReference type="ChEBI" id="CHEBI:29484"/>
        <dbReference type="ChEBI" id="CHEBI:58195"/>
        <dbReference type="ChEBI" id="CHEBI:58199"/>
        <dbReference type="EC" id="4.4.1.21"/>
    </reaction>
</comment>
<comment type="cofactor">
    <cofactor evidence="1">
        <name>Fe cation</name>
        <dbReference type="ChEBI" id="CHEBI:24875"/>
    </cofactor>
    <text evidence="1">Binds 1 Fe cation per subunit.</text>
</comment>
<comment type="subunit">
    <text evidence="1">Homodimer.</text>
</comment>
<comment type="similarity">
    <text evidence="1">Belongs to the LuxS family.</text>
</comment>
<evidence type="ECO:0000255" key="1">
    <source>
        <dbReference type="HAMAP-Rule" id="MF_00091"/>
    </source>
</evidence>
<reference key="1">
    <citation type="journal article" date="2004" name="Proc. Natl. Acad. Sci. U.S.A.">
        <title>The genome sequence of the probiotic intestinal bacterium Lactobacillus johnsonii NCC 533.</title>
        <authorList>
            <person name="Pridmore R.D."/>
            <person name="Berger B."/>
            <person name="Desiere F."/>
            <person name="Vilanova D."/>
            <person name="Barretto C."/>
            <person name="Pittet A.-C."/>
            <person name="Zwahlen M.-C."/>
            <person name="Rouvet M."/>
            <person name="Altermann E."/>
            <person name="Barrangou R."/>
            <person name="Mollet B."/>
            <person name="Mercenier A."/>
            <person name="Klaenhammer T."/>
            <person name="Arigoni F."/>
            <person name="Schell M.A."/>
        </authorList>
    </citation>
    <scope>NUCLEOTIDE SEQUENCE [LARGE SCALE GENOMIC DNA]</scope>
    <source>
        <strain>CNCM I-1225 / La1 / NCC 533</strain>
    </source>
</reference>
<name>LUXS_LACJO</name>
<proteinExistence type="inferred from homology"/>
<dbReference type="EC" id="4.4.1.21" evidence="1"/>
<dbReference type="EMBL" id="AE017198">
    <property type="protein sequence ID" value="AAS09590.1"/>
    <property type="molecule type" value="Genomic_DNA"/>
</dbReference>
<dbReference type="RefSeq" id="WP_004897959.1">
    <property type="nucleotide sequence ID" value="NC_005362.1"/>
</dbReference>
<dbReference type="SMR" id="Q74HV0"/>
<dbReference type="KEGG" id="ljo:LJ_0631"/>
<dbReference type="eggNOG" id="COG1854">
    <property type="taxonomic scope" value="Bacteria"/>
</dbReference>
<dbReference type="HOGENOM" id="CLU_107531_2_1_9"/>
<dbReference type="BRENDA" id="4.4.1.21">
    <property type="organism ID" value="2873"/>
</dbReference>
<dbReference type="Proteomes" id="UP000000581">
    <property type="component" value="Chromosome"/>
</dbReference>
<dbReference type="GO" id="GO:0005506">
    <property type="term" value="F:iron ion binding"/>
    <property type="evidence" value="ECO:0007669"/>
    <property type="project" value="InterPro"/>
</dbReference>
<dbReference type="GO" id="GO:0043768">
    <property type="term" value="F:S-ribosylhomocysteine lyase activity"/>
    <property type="evidence" value="ECO:0007669"/>
    <property type="project" value="UniProtKB-UniRule"/>
</dbReference>
<dbReference type="GO" id="GO:0009372">
    <property type="term" value="P:quorum sensing"/>
    <property type="evidence" value="ECO:0007669"/>
    <property type="project" value="UniProtKB-UniRule"/>
</dbReference>
<dbReference type="Gene3D" id="3.30.1360.80">
    <property type="entry name" value="S-ribosylhomocysteinase (LuxS)"/>
    <property type="match status" value="1"/>
</dbReference>
<dbReference type="HAMAP" id="MF_00091">
    <property type="entry name" value="LuxS"/>
    <property type="match status" value="1"/>
</dbReference>
<dbReference type="InterPro" id="IPR037005">
    <property type="entry name" value="LuxS_sf"/>
</dbReference>
<dbReference type="InterPro" id="IPR011249">
    <property type="entry name" value="Metalloenz_LuxS/M16"/>
</dbReference>
<dbReference type="InterPro" id="IPR003815">
    <property type="entry name" value="S-ribosylhomocysteinase"/>
</dbReference>
<dbReference type="NCBIfam" id="NF002606">
    <property type="entry name" value="PRK02260.2-4"/>
    <property type="match status" value="1"/>
</dbReference>
<dbReference type="NCBIfam" id="NF002608">
    <property type="entry name" value="PRK02260.3-1"/>
    <property type="match status" value="1"/>
</dbReference>
<dbReference type="PANTHER" id="PTHR35799">
    <property type="entry name" value="S-RIBOSYLHOMOCYSTEINE LYASE"/>
    <property type="match status" value="1"/>
</dbReference>
<dbReference type="PANTHER" id="PTHR35799:SF1">
    <property type="entry name" value="S-RIBOSYLHOMOCYSTEINE LYASE"/>
    <property type="match status" value="1"/>
</dbReference>
<dbReference type="Pfam" id="PF02664">
    <property type="entry name" value="LuxS"/>
    <property type="match status" value="1"/>
</dbReference>
<dbReference type="PIRSF" id="PIRSF006160">
    <property type="entry name" value="AI2"/>
    <property type="match status" value="1"/>
</dbReference>
<dbReference type="PRINTS" id="PR01487">
    <property type="entry name" value="LUXSPROTEIN"/>
</dbReference>
<dbReference type="SUPFAM" id="SSF63411">
    <property type="entry name" value="LuxS/MPP-like metallohydrolase"/>
    <property type="match status" value="1"/>
</dbReference>
<protein>
    <recommendedName>
        <fullName evidence="1">S-ribosylhomocysteine lyase</fullName>
        <ecNumber evidence="1">4.4.1.21</ecNumber>
    </recommendedName>
    <alternativeName>
        <fullName evidence="1">AI-2 synthesis protein</fullName>
    </alternativeName>
    <alternativeName>
        <fullName evidence="1">Autoinducer-2 production protein LuxS</fullName>
    </alternativeName>
</protein>
<keyword id="KW-0071">Autoinducer synthesis</keyword>
<keyword id="KW-0408">Iron</keyword>
<keyword id="KW-0456">Lyase</keyword>
<keyword id="KW-0479">Metal-binding</keyword>
<keyword id="KW-0673">Quorum sensing</keyword>
<organism>
    <name type="scientific">Lactobacillus johnsonii (strain CNCM I-12250 / La1 / NCC 533)</name>
    <dbReference type="NCBI Taxonomy" id="257314"/>
    <lineage>
        <taxon>Bacteria</taxon>
        <taxon>Bacillati</taxon>
        <taxon>Bacillota</taxon>
        <taxon>Bacilli</taxon>
        <taxon>Lactobacillales</taxon>
        <taxon>Lactobacillaceae</taxon>
        <taxon>Lactobacillus</taxon>
    </lineage>
</organism>
<accession>Q74HV0</accession>
<feature type="chain" id="PRO_0000172231" description="S-ribosylhomocysteine lyase">
    <location>
        <begin position="1"/>
        <end position="158"/>
    </location>
</feature>
<feature type="binding site" evidence="1">
    <location>
        <position position="54"/>
    </location>
    <ligand>
        <name>Fe cation</name>
        <dbReference type="ChEBI" id="CHEBI:24875"/>
    </ligand>
</feature>
<feature type="binding site" evidence="1">
    <location>
        <position position="58"/>
    </location>
    <ligand>
        <name>Fe cation</name>
        <dbReference type="ChEBI" id="CHEBI:24875"/>
    </ligand>
</feature>
<feature type="binding site" evidence="1">
    <location>
        <position position="124"/>
    </location>
    <ligand>
        <name>Fe cation</name>
        <dbReference type="ChEBI" id="CHEBI:24875"/>
    </ligand>
</feature>
<sequence length="158" mass="17795">MGKVESFELDHTKVKAPYVRLITVEEGQKGDKISNFDLRLVQPNENAIPTGGLHTIEHLLAGLLRDRIDGYIDCSPFGCRTGFHLLVWGTPSTTDVAKALKESLEEIRDNITWEDVPGTTIESCGNYRDHSLFSAKQWSRDILEKGISDDPFERHVVE</sequence>
<gene>
    <name evidence="1" type="primary">luxS</name>
    <name type="ordered locus">LJ_0631</name>
</gene>